<keyword id="KW-0963">Cytoplasm</keyword>
<keyword id="KW-0378">Hydrolase</keyword>
<keyword id="KW-0479">Metal-binding</keyword>
<keyword id="KW-0547">Nucleotide-binding</keyword>
<sequence length="247" mass="27391">MNLLITNDDGISSAGIKALERVLGKSYNTYLIAPLKERSVTSMALTVFQGMRVERINDNHYIADGFPVDCVNIGLYAEIFPKIDFVISGINRGVNMGYDVHYSGTVGAAKHGALHGIPSLAVSSGRIDPEDGYEKEAELVLAFLEQYKSQIQSGEIWNLNFPPEVSGTGTISELVFTRLGRRRYSEKYEKKQIIEGVSEFQLNGSLLGHDEETGTDFEAYAQGKIPLTPIQLDLTEKNRLKELLTNR</sequence>
<dbReference type="EC" id="3.1.3.5" evidence="1"/>
<dbReference type="EMBL" id="CP000777">
    <property type="protein sequence ID" value="ABZ92982.1"/>
    <property type="molecule type" value="Genomic_DNA"/>
</dbReference>
<dbReference type="RefSeq" id="WP_012387484.1">
    <property type="nucleotide sequence ID" value="NC_010842.1"/>
</dbReference>
<dbReference type="SMR" id="B0SBG1"/>
<dbReference type="KEGG" id="lbf:LBF_0439"/>
<dbReference type="HOGENOM" id="CLU_045192_1_2_12"/>
<dbReference type="GO" id="GO:0005737">
    <property type="term" value="C:cytoplasm"/>
    <property type="evidence" value="ECO:0007669"/>
    <property type="project" value="UniProtKB-SubCell"/>
</dbReference>
<dbReference type="GO" id="GO:0008254">
    <property type="term" value="F:3'-nucleotidase activity"/>
    <property type="evidence" value="ECO:0007669"/>
    <property type="project" value="TreeGrafter"/>
</dbReference>
<dbReference type="GO" id="GO:0008253">
    <property type="term" value="F:5'-nucleotidase activity"/>
    <property type="evidence" value="ECO:0007669"/>
    <property type="project" value="UniProtKB-UniRule"/>
</dbReference>
<dbReference type="GO" id="GO:0004309">
    <property type="term" value="F:exopolyphosphatase activity"/>
    <property type="evidence" value="ECO:0007669"/>
    <property type="project" value="TreeGrafter"/>
</dbReference>
<dbReference type="GO" id="GO:0046872">
    <property type="term" value="F:metal ion binding"/>
    <property type="evidence" value="ECO:0007669"/>
    <property type="project" value="UniProtKB-UniRule"/>
</dbReference>
<dbReference type="GO" id="GO:0000166">
    <property type="term" value="F:nucleotide binding"/>
    <property type="evidence" value="ECO:0007669"/>
    <property type="project" value="UniProtKB-KW"/>
</dbReference>
<dbReference type="Gene3D" id="3.40.1210.10">
    <property type="entry name" value="Survival protein SurE-like phosphatase/nucleotidase"/>
    <property type="match status" value="1"/>
</dbReference>
<dbReference type="HAMAP" id="MF_00060">
    <property type="entry name" value="SurE"/>
    <property type="match status" value="1"/>
</dbReference>
<dbReference type="InterPro" id="IPR030048">
    <property type="entry name" value="SurE"/>
</dbReference>
<dbReference type="InterPro" id="IPR002828">
    <property type="entry name" value="SurE-like_Pase/nucleotidase"/>
</dbReference>
<dbReference type="InterPro" id="IPR036523">
    <property type="entry name" value="SurE-like_sf"/>
</dbReference>
<dbReference type="NCBIfam" id="TIGR00087">
    <property type="entry name" value="surE"/>
    <property type="match status" value="1"/>
</dbReference>
<dbReference type="PANTHER" id="PTHR30457">
    <property type="entry name" value="5'-NUCLEOTIDASE SURE"/>
    <property type="match status" value="1"/>
</dbReference>
<dbReference type="PANTHER" id="PTHR30457:SF12">
    <property type="entry name" value="5'_3'-NUCLEOTIDASE SURE"/>
    <property type="match status" value="1"/>
</dbReference>
<dbReference type="Pfam" id="PF01975">
    <property type="entry name" value="SurE"/>
    <property type="match status" value="1"/>
</dbReference>
<dbReference type="SUPFAM" id="SSF64167">
    <property type="entry name" value="SurE-like"/>
    <property type="match status" value="1"/>
</dbReference>
<gene>
    <name evidence="1" type="primary">surE</name>
    <name type="ordered locus">LBF_0439</name>
</gene>
<feature type="chain" id="PRO_1000092013" description="5'-nucleotidase SurE">
    <location>
        <begin position="1"/>
        <end position="247"/>
    </location>
</feature>
<feature type="binding site" evidence="1">
    <location>
        <position position="8"/>
    </location>
    <ligand>
        <name>a divalent metal cation</name>
        <dbReference type="ChEBI" id="CHEBI:60240"/>
    </ligand>
</feature>
<feature type="binding site" evidence="1">
    <location>
        <position position="9"/>
    </location>
    <ligand>
        <name>a divalent metal cation</name>
        <dbReference type="ChEBI" id="CHEBI:60240"/>
    </ligand>
</feature>
<feature type="binding site" evidence="1">
    <location>
        <position position="39"/>
    </location>
    <ligand>
        <name>a divalent metal cation</name>
        <dbReference type="ChEBI" id="CHEBI:60240"/>
    </ligand>
</feature>
<feature type="binding site" evidence="1">
    <location>
        <position position="91"/>
    </location>
    <ligand>
        <name>a divalent metal cation</name>
        <dbReference type="ChEBI" id="CHEBI:60240"/>
    </ligand>
</feature>
<organism>
    <name type="scientific">Leptospira biflexa serovar Patoc (strain Patoc 1 / Ames)</name>
    <dbReference type="NCBI Taxonomy" id="355278"/>
    <lineage>
        <taxon>Bacteria</taxon>
        <taxon>Pseudomonadati</taxon>
        <taxon>Spirochaetota</taxon>
        <taxon>Spirochaetia</taxon>
        <taxon>Leptospirales</taxon>
        <taxon>Leptospiraceae</taxon>
        <taxon>Leptospira</taxon>
    </lineage>
</organism>
<accession>B0SBG1</accession>
<name>SURE_LEPBA</name>
<protein>
    <recommendedName>
        <fullName evidence="1">5'-nucleotidase SurE</fullName>
        <ecNumber evidence="1">3.1.3.5</ecNumber>
    </recommendedName>
    <alternativeName>
        <fullName evidence="1">Nucleoside 5'-monophosphate phosphohydrolase</fullName>
    </alternativeName>
</protein>
<comment type="function">
    <text evidence="1">Nucleotidase that shows phosphatase activity on nucleoside 5'-monophosphates.</text>
</comment>
<comment type="catalytic activity">
    <reaction evidence="1">
        <text>a ribonucleoside 5'-phosphate + H2O = a ribonucleoside + phosphate</text>
        <dbReference type="Rhea" id="RHEA:12484"/>
        <dbReference type="ChEBI" id="CHEBI:15377"/>
        <dbReference type="ChEBI" id="CHEBI:18254"/>
        <dbReference type="ChEBI" id="CHEBI:43474"/>
        <dbReference type="ChEBI" id="CHEBI:58043"/>
        <dbReference type="EC" id="3.1.3.5"/>
    </reaction>
</comment>
<comment type="cofactor">
    <cofactor evidence="1">
        <name>a divalent metal cation</name>
        <dbReference type="ChEBI" id="CHEBI:60240"/>
    </cofactor>
    <text evidence="1">Binds 1 divalent metal cation per subunit.</text>
</comment>
<comment type="subcellular location">
    <subcellularLocation>
        <location evidence="1">Cytoplasm</location>
    </subcellularLocation>
</comment>
<comment type="similarity">
    <text evidence="1">Belongs to the SurE nucleotidase family.</text>
</comment>
<reference key="1">
    <citation type="journal article" date="2008" name="PLoS ONE">
        <title>Genome sequence of the saprophyte Leptospira biflexa provides insights into the evolution of Leptospira and the pathogenesis of leptospirosis.</title>
        <authorList>
            <person name="Picardeau M."/>
            <person name="Bulach D.M."/>
            <person name="Bouchier C."/>
            <person name="Zuerner R.L."/>
            <person name="Zidane N."/>
            <person name="Wilson P.J."/>
            <person name="Creno S."/>
            <person name="Kuczek E.S."/>
            <person name="Bommezzadri S."/>
            <person name="Davis J.C."/>
            <person name="McGrath A."/>
            <person name="Johnson M.J."/>
            <person name="Boursaux-Eude C."/>
            <person name="Seemann T."/>
            <person name="Rouy Z."/>
            <person name="Coppel R.L."/>
            <person name="Rood J.I."/>
            <person name="Lajus A."/>
            <person name="Davies J.K."/>
            <person name="Medigue C."/>
            <person name="Adler B."/>
        </authorList>
    </citation>
    <scope>NUCLEOTIDE SEQUENCE [LARGE SCALE GENOMIC DNA]</scope>
    <source>
        <strain>Patoc 1 / Ames</strain>
    </source>
</reference>
<proteinExistence type="inferred from homology"/>
<evidence type="ECO:0000255" key="1">
    <source>
        <dbReference type="HAMAP-Rule" id="MF_00060"/>
    </source>
</evidence>